<evidence type="ECO:0000255" key="1">
    <source>
        <dbReference type="HAMAP-Rule" id="MF_01363"/>
    </source>
</evidence>
<evidence type="ECO:0000305" key="2"/>
<organism>
    <name type="scientific">Desulfitobacterium hafniense (strain Y51)</name>
    <dbReference type="NCBI Taxonomy" id="138119"/>
    <lineage>
        <taxon>Bacteria</taxon>
        <taxon>Bacillati</taxon>
        <taxon>Bacillota</taxon>
        <taxon>Clostridia</taxon>
        <taxon>Eubacteriales</taxon>
        <taxon>Desulfitobacteriaceae</taxon>
        <taxon>Desulfitobacterium</taxon>
    </lineage>
</organism>
<proteinExistence type="inferred from homology"/>
<sequence length="103" mass="11394">MYAVIETGGKQFRVEEGKVLFVEKLDANVGDTVTIDKVLLVEKDGAVKVGTPVVDGAKALLKVVEHGKGEKIIVFKMKSKKNYRRKQGHRQPYTKVVVEAIQA</sequence>
<protein>
    <recommendedName>
        <fullName evidence="1">Large ribosomal subunit protein bL21</fullName>
    </recommendedName>
    <alternativeName>
        <fullName evidence="2">50S ribosomal protein L21</fullName>
    </alternativeName>
</protein>
<gene>
    <name evidence="1" type="primary">rplU</name>
    <name type="ordered locus">DSY3166</name>
</gene>
<keyword id="KW-1185">Reference proteome</keyword>
<keyword id="KW-0687">Ribonucleoprotein</keyword>
<keyword id="KW-0689">Ribosomal protein</keyword>
<keyword id="KW-0694">RNA-binding</keyword>
<keyword id="KW-0699">rRNA-binding</keyword>
<comment type="function">
    <text evidence="1">This protein binds to 23S rRNA in the presence of protein L20.</text>
</comment>
<comment type="subunit">
    <text evidence="1">Part of the 50S ribosomal subunit. Contacts protein L20.</text>
</comment>
<comment type="similarity">
    <text evidence="1">Belongs to the bacterial ribosomal protein bL21 family.</text>
</comment>
<reference key="1">
    <citation type="journal article" date="2006" name="J. Bacteriol.">
        <title>Complete genome sequence of the dehalorespiring bacterium Desulfitobacterium hafniense Y51 and comparison with Dehalococcoides ethenogenes 195.</title>
        <authorList>
            <person name="Nonaka H."/>
            <person name="Keresztes G."/>
            <person name="Shinoda Y."/>
            <person name="Ikenaga Y."/>
            <person name="Abe M."/>
            <person name="Naito K."/>
            <person name="Inatomi K."/>
            <person name="Furukawa K."/>
            <person name="Inui M."/>
            <person name="Yukawa H."/>
        </authorList>
    </citation>
    <scope>NUCLEOTIDE SEQUENCE [LARGE SCALE GENOMIC DNA]</scope>
    <source>
        <strain>Y51</strain>
    </source>
</reference>
<name>RL21_DESHY</name>
<dbReference type="EMBL" id="AP008230">
    <property type="protein sequence ID" value="BAE84955.1"/>
    <property type="molecule type" value="Genomic_DNA"/>
</dbReference>
<dbReference type="RefSeq" id="WP_011460896.1">
    <property type="nucleotide sequence ID" value="NC_007907.1"/>
</dbReference>
<dbReference type="SMR" id="Q24SN7"/>
<dbReference type="STRING" id="138119.DSY3166"/>
<dbReference type="KEGG" id="dsy:DSY3166"/>
<dbReference type="eggNOG" id="COG0261">
    <property type="taxonomic scope" value="Bacteria"/>
</dbReference>
<dbReference type="HOGENOM" id="CLU_061463_3_2_9"/>
<dbReference type="Proteomes" id="UP000001946">
    <property type="component" value="Chromosome"/>
</dbReference>
<dbReference type="GO" id="GO:0005737">
    <property type="term" value="C:cytoplasm"/>
    <property type="evidence" value="ECO:0007669"/>
    <property type="project" value="UniProtKB-ARBA"/>
</dbReference>
<dbReference type="GO" id="GO:1990904">
    <property type="term" value="C:ribonucleoprotein complex"/>
    <property type="evidence" value="ECO:0007669"/>
    <property type="project" value="UniProtKB-KW"/>
</dbReference>
<dbReference type="GO" id="GO:0005840">
    <property type="term" value="C:ribosome"/>
    <property type="evidence" value="ECO:0007669"/>
    <property type="project" value="UniProtKB-KW"/>
</dbReference>
<dbReference type="GO" id="GO:0019843">
    <property type="term" value="F:rRNA binding"/>
    <property type="evidence" value="ECO:0007669"/>
    <property type="project" value="UniProtKB-UniRule"/>
</dbReference>
<dbReference type="GO" id="GO:0003735">
    <property type="term" value="F:structural constituent of ribosome"/>
    <property type="evidence" value="ECO:0007669"/>
    <property type="project" value="InterPro"/>
</dbReference>
<dbReference type="GO" id="GO:0006412">
    <property type="term" value="P:translation"/>
    <property type="evidence" value="ECO:0007669"/>
    <property type="project" value="UniProtKB-UniRule"/>
</dbReference>
<dbReference type="HAMAP" id="MF_01363">
    <property type="entry name" value="Ribosomal_bL21"/>
    <property type="match status" value="1"/>
</dbReference>
<dbReference type="InterPro" id="IPR028909">
    <property type="entry name" value="bL21-like"/>
</dbReference>
<dbReference type="InterPro" id="IPR036164">
    <property type="entry name" value="bL21-like_sf"/>
</dbReference>
<dbReference type="InterPro" id="IPR001787">
    <property type="entry name" value="Ribosomal_bL21"/>
</dbReference>
<dbReference type="InterPro" id="IPR018258">
    <property type="entry name" value="Ribosomal_bL21_CS"/>
</dbReference>
<dbReference type="NCBIfam" id="TIGR00061">
    <property type="entry name" value="L21"/>
    <property type="match status" value="1"/>
</dbReference>
<dbReference type="PANTHER" id="PTHR21349">
    <property type="entry name" value="50S RIBOSOMAL PROTEIN L21"/>
    <property type="match status" value="1"/>
</dbReference>
<dbReference type="PANTHER" id="PTHR21349:SF0">
    <property type="entry name" value="LARGE RIBOSOMAL SUBUNIT PROTEIN BL21M"/>
    <property type="match status" value="1"/>
</dbReference>
<dbReference type="Pfam" id="PF00829">
    <property type="entry name" value="Ribosomal_L21p"/>
    <property type="match status" value="1"/>
</dbReference>
<dbReference type="SUPFAM" id="SSF141091">
    <property type="entry name" value="L21p-like"/>
    <property type="match status" value="1"/>
</dbReference>
<dbReference type="PROSITE" id="PS01169">
    <property type="entry name" value="RIBOSOMAL_L21"/>
    <property type="match status" value="1"/>
</dbReference>
<accession>Q24SN7</accession>
<feature type="chain" id="PRO_0000269311" description="Large ribosomal subunit protein bL21">
    <location>
        <begin position="1"/>
        <end position="103"/>
    </location>
</feature>